<gene>
    <name evidence="1" type="primary">fusA1</name>
    <name type="ordered locus">Swol_1214</name>
</gene>
<name>EFG1_SYNWW</name>
<feature type="chain" id="PRO_0000263526" description="Elongation factor G 1">
    <location>
        <begin position="1"/>
        <end position="673"/>
    </location>
</feature>
<feature type="domain" description="tr-type G">
    <location>
        <begin position="3"/>
        <end position="277"/>
    </location>
</feature>
<feature type="binding site" evidence="1">
    <location>
        <begin position="12"/>
        <end position="19"/>
    </location>
    <ligand>
        <name>GTP</name>
        <dbReference type="ChEBI" id="CHEBI:37565"/>
    </ligand>
</feature>
<feature type="binding site" evidence="1">
    <location>
        <begin position="76"/>
        <end position="80"/>
    </location>
    <ligand>
        <name>GTP</name>
        <dbReference type="ChEBI" id="CHEBI:37565"/>
    </ligand>
</feature>
<feature type="binding site" evidence="1">
    <location>
        <begin position="130"/>
        <end position="133"/>
    </location>
    <ligand>
        <name>GTP</name>
        <dbReference type="ChEBI" id="CHEBI:37565"/>
    </ligand>
</feature>
<accession>Q0AXN1</accession>
<dbReference type="EMBL" id="CP000448">
    <property type="protein sequence ID" value="ABI68523.1"/>
    <property type="molecule type" value="Genomic_DNA"/>
</dbReference>
<dbReference type="RefSeq" id="WP_011640626.1">
    <property type="nucleotide sequence ID" value="NC_008346.1"/>
</dbReference>
<dbReference type="SMR" id="Q0AXN1"/>
<dbReference type="STRING" id="335541.Swol_1214"/>
<dbReference type="KEGG" id="swo:Swol_1214"/>
<dbReference type="eggNOG" id="COG0480">
    <property type="taxonomic scope" value="Bacteria"/>
</dbReference>
<dbReference type="HOGENOM" id="CLU_002794_4_1_9"/>
<dbReference type="OrthoDB" id="9804431at2"/>
<dbReference type="Proteomes" id="UP000001968">
    <property type="component" value="Chromosome"/>
</dbReference>
<dbReference type="GO" id="GO:0005737">
    <property type="term" value="C:cytoplasm"/>
    <property type="evidence" value="ECO:0007669"/>
    <property type="project" value="UniProtKB-SubCell"/>
</dbReference>
<dbReference type="GO" id="GO:0005525">
    <property type="term" value="F:GTP binding"/>
    <property type="evidence" value="ECO:0007669"/>
    <property type="project" value="UniProtKB-UniRule"/>
</dbReference>
<dbReference type="GO" id="GO:0003924">
    <property type="term" value="F:GTPase activity"/>
    <property type="evidence" value="ECO:0007669"/>
    <property type="project" value="InterPro"/>
</dbReference>
<dbReference type="GO" id="GO:0003746">
    <property type="term" value="F:translation elongation factor activity"/>
    <property type="evidence" value="ECO:0007669"/>
    <property type="project" value="UniProtKB-UniRule"/>
</dbReference>
<dbReference type="GO" id="GO:0032790">
    <property type="term" value="P:ribosome disassembly"/>
    <property type="evidence" value="ECO:0007669"/>
    <property type="project" value="TreeGrafter"/>
</dbReference>
<dbReference type="CDD" id="cd01886">
    <property type="entry name" value="EF-G"/>
    <property type="match status" value="1"/>
</dbReference>
<dbReference type="CDD" id="cd16262">
    <property type="entry name" value="EFG_III"/>
    <property type="match status" value="1"/>
</dbReference>
<dbReference type="CDD" id="cd01434">
    <property type="entry name" value="EFG_mtEFG1_IV"/>
    <property type="match status" value="1"/>
</dbReference>
<dbReference type="CDD" id="cd03713">
    <property type="entry name" value="EFG_mtEFG_C"/>
    <property type="match status" value="1"/>
</dbReference>
<dbReference type="CDD" id="cd04088">
    <property type="entry name" value="EFG_mtEFG_II"/>
    <property type="match status" value="1"/>
</dbReference>
<dbReference type="FunFam" id="2.40.30.10:FF:000006">
    <property type="entry name" value="Elongation factor G"/>
    <property type="match status" value="1"/>
</dbReference>
<dbReference type="FunFam" id="3.30.230.10:FF:000003">
    <property type="entry name" value="Elongation factor G"/>
    <property type="match status" value="1"/>
</dbReference>
<dbReference type="FunFam" id="3.30.70.240:FF:000001">
    <property type="entry name" value="Elongation factor G"/>
    <property type="match status" value="1"/>
</dbReference>
<dbReference type="FunFam" id="3.30.70.870:FF:000001">
    <property type="entry name" value="Elongation factor G"/>
    <property type="match status" value="1"/>
</dbReference>
<dbReference type="FunFam" id="3.40.50.300:FF:000029">
    <property type="entry name" value="Elongation factor G"/>
    <property type="match status" value="1"/>
</dbReference>
<dbReference type="Gene3D" id="3.30.230.10">
    <property type="match status" value="1"/>
</dbReference>
<dbReference type="Gene3D" id="3.30.70.240">
    <property type="match status" value="1"/>
</dbReference>
<dbReference type="Gene3D" id="3.30.70.870">
    <property type="entry name" value="Elongation Factor G (Translational Gtpase), domain 3"/>
    <property type="match status" value="1"/>
</dbReference>
<dbReference type="Gene3D" id="3.40.50.300">
    <property type="entry name" value="P-loop containing nucleotide triphosphate hydrolases"/>
    <property type="match status" value="1"/>
</dbReference>
<dbReference type="Gene3D" id="2.40.30.10">
    <property type="entry name" value="Translation factors"/>
    <property type="match status" value="1"/>
</dbReference>
<dbReference type="HAMAP" id="MF_00054_B">
    <property type="entry name" value="EF_G_EF_2_B"/>
    <property type="match status" value="1"/>
</dbReference>
<dbReference type="InterPro" id="IPR053905">
    <property type="entry name" value="EF-G-like_DII"/>
</dbReference>
<dbReference type="InterPro" id="IPR041095">
    <property type="entry name" value="EFG_II"/>
</dbReference>
<dbReference type="InterPro" id="IPR009022">
    <property type="entry name" value="EFG_III"/>
</dbReference>
<dbReference type="InterPro" id="IPR035647">
    <property type="entry name" value="EFG_III/V"/>
</dbReference>
<dbReference type="InterPro" id="IPR047872">
    <property type="entry name" value="EFG_IV"/>
</dbReference>
<dbReference type="InterPro" id="IPR035649">
    <property type="entry name" value="EFG_V"/>
</dbReference>
<dbReference type="InterPro" id="IPR000640">
    <property type="entry name" value="EFG_V-like"/>
</dbReference>
<dbReference type="InterPro" id="IPR031157">
    <property type="entry name" value="G_TR_CS"/>
</dbReference>
<dbReference type="InterPro" id="IPR027417">
    <property type="entry name" value="P-loop_NTPase"/>
</dbReference>
<dbReference type="InterPro" id="IPR020568">
    <property type="entry name" value="Ribosomal_Su5_D2-typ_SF"/>
</dbReference>
<dbReference type="InterPro" id="IPR014721">
    <property type="entry name" value="Ribsml_uS5_D2-typ_fold_subgr"/>
</dbReference>
<dbReference type="InterPro" id="IPR005225">
    <property type="entry name" value="Small_GTP-bd"/>
</dbReference>
<dbReference type="InterPro" id="IPR000795">
    <property type="entry name" value="T_Tr_GTP-bd_dom"/>
</dbReference>
<dbReference type="InterPro" id="IPR009000">
    <property type="entry name" value="Transl_B-barrel_sf"/>
</dbReference>
<dbReference type="InterPro" id="IPR004540">
    <property type="entry name" value="Transl_elong_EFG/EF2"/>
</dbReference>
<dbReference type="InterPro" id="IPR005517">
    <property type="entry name" value="Transl_elong_EFG/EF2_IV"/>
</dbReference>
<dbReference type="NCBIfam" id="TIGR00484">
    <property type="entry name" value="EF-G"/>
    <property type="match status" value="1"/>
</dbReference>
<dbReference type="NCBIfam" id="NF009381">
    <property type="entry name" value="PRK12740.1-5"/>
    <property type="match status" value="1"/>
</dbReference>
<dbReference type="NCBIfam" id="TIGR00231">
    <property type="entry name" value="small_GTP"/>
    <property type="match status" value="1"/>
</dbReference>
<dbReference type="PANTHER" id="PTHR43261:SF1">
    <property type="entry name" value="RIBOSOME-RELEASING FACTOR 2, MITOCHONDRIAL"/>
    <property type="match status" value="1"/>
</dbReference>
<dbReference type="PANTHER" id="PTHR43261">
    <property type="entry name" value="TRANSLATION ELONGATION FACTOR G-RELATED"/>
    <property type="match status" value="1"/>
</dbReference>
<dbReference type="Pfam" id="PF22042">
    <property type="entry name" value="EF-G_D2"/>
    <property type="match status" value="1"/>
</dbReference>
<dbReference type="Pfam" id="PF00679">
    <property type="entry name" value="EFG_C"/>
    <property type="match status" value="1"/>
</dbReference>
<dbReference type="Pfam" id="PF14492">
    <property type="entry name" value="EFG_III"/>
    <property type="match status" value="1"/>
</dbReference>
<dbReference type="Pfam" id="PF03764">
    <property type="entry name" value="EFG_IV"/>
    <property type="match status" value="1"/>
</dbReference>
<dbReference type="Pfam" id="PF00009">
    <property type="entry name" value="GTP_EFTU"/>
    <property type="match status" value="1"/>
</dbReference>
<dbReference type="PRINTS" id="PR00315">
    <property type="entry name" value="ELONGATNFCT"/>
</dbReference>
<dbReference type="SMART" id="SM00838">
    <property type="entry name" value="EFG_C"/>
    <property type="match status" value="1"/>
</dbReference>
<dbReference type="SMART" id="SM00889">
    <property type="entry name" value="EFG_IV"/>
    <property type="match status" value="1"/>
</dbReference>
<dbReference type="SUPFAM" id="SSF54980">
    <property type="entry name" value="EF-G C-terminal domain-like"/>
    <property type="match status" value="2"/>
</dbReference>
<dbReference type="SUPFAM" id="SSF52540">
    <property type="entry name" value="P-loop containing nucleoside triphosphate hydrolases"/>
    <property type="match status" value="1"/>
</dbReference>
<dbReference type="SUPFAM" id="SSF54211">
    <property type="entry name" value="Ribosomal protein S5 domain 2-like"/>
    <property type="match status" value="1"/>
</dbReference>
<dbReference type="SUPFAM" id="SSF50447">
    <property type="entry name" value="Translation proteins"/>
    <property type="match status" value="1"/>
</dbReference>
<dbReference type="PROSITE" id="PS00301">
    <property type="entry name" value="G_TR_1"/>
    <property type="match status" value="1"/>
</dbReference>
<dbReference type="PROSITE" id="PS51722">
    <property type="entry name" value="G_TR_2"/>
    <property type="match status" value="1"/>
</dbReference>
<evidence type="ECO:0000255" key="1">
    <source>
        <dbReference type="HAMAP-Rule" id="MF_00054"/>
    </source>
</evidence>
<sequence>MLKELRNIGIIAHIDAGKTTTTERILYYTGLTHKMGETHDGDSIMDFLPWEKERGITVASAATRCFWKGNTINIIDTPGHVDFTAEVERSLRILDGAVVIFCGKGGVEPQSETVWRQADKYQIPRIAYVNKMDAVGADFFRVIEQIKQRLGSNPLVISLPVFKEECFSGIIDLIKMKYYTFAGKLGNDIAEESIPSEYTETAEEWRSVLVEKLAETDETLLDLYYNNEEIDAGLLSRVIRTNTVSGNMVPVCCGSSYRNIGVQLLLDSIVDYLPSPLDLPGSKAVIMETTETINIMPDSQDAFSALVFKIINDRHVGRLAFARIYSGKLKAGTVVFNSSKNKRERVGRLLRIHAEHREEINEVAAGDIVAIIGLKDIGTGDTLCSENFPLLLETIDFPQPVIQIAIEPKNQAGLDKISEALNRISAEDPTFKISYNKETGQVLLAGMGELHLEIVAERLAREFKLDFNTGQPQVAYRETIGKSAEQVTRYVKQTGGKGQFAHVVLRLEPGEGFEFINRISQGSIPREYIPAVESGIKQALEEGVLKGYPVVNVKATLLDGSFHEVDSSEMAFRTAAFLATRECLKKAHPRMLEPVMRLEIVSPEEYTGNIINNITNRRGKLESLEMENHTQIIRGCVPLAELFGYSTVLRSLTQGRAGFSMEFSHYEERHLAS</sequence>
<proteinExistence type="inferred from homology"/>
<comment type="function">
    <text evidence="1">Catalyzes the GTP-dependent ribosomal translocation step during translation elongation. During this step, the ribosome changes from the pre-translocational (PRE) to the post-translocational (POST) state as the newly formed A-site-bound peptidyl-tRNA and P-site-bound deacylated tRNA move to the P and E sites, respectively. Catalyzes the coordinated movement of the two tRNA molecules, the mRNA and conformational changes in the ribosome.</text>
</comment>
<comment type="subcellular location">
    <subcellularLocation>
        <location evidence="1">Cytoplasm</location>
    </subcellularLocation>
</comment>
<comment type="similarity">
    <text evidence="1">Belongs to the TRAFAC class translation factor GTPase superfamily. Classic translation factor GTPase family. EF-G/EF-2 subfamily.</text>
</comment>
<reference key="1">
    <citation type="journal article" date="2010" name="Environ. Microbiol.">
        <title>The genome of Syntrophomonas wolfei: new insights into syntrophic metabolism and biohydrogen production.</title>
        <authorList>
            <person name="Sieber J.R."/>
            <person name="Sims D.R."/>
            <person name="Han C."/>
            <person name="Kim E."/>
            <person name="Lykidis A."/>
            <person name="Lapidus A.L."/>
            <person name="McDonnald E."/>
            <person name="Rohlin L."/>
            <person name="Culley D.E."/>
            <person name="Gunsalus R."/>
            <person name="McInerney M.J."/>
        </authorList>
    </citation>
    <scope>NUCLEOTIDE SEQUENCE [LARGE SCALE GENOMIC DNA]</scope>
    <source>
        <strain>DSM 2245B / Goettingen</strain>
    </source>
</reference>
<organism>
    <name type="scientific">Syntrophomonas wolfei subsp. wolfei (strain DSM 2245B / Goettingen)</name>
    <dbReference type="NCBI Taxonomy" id="335541"/>
    <lineage>
        <taxon>Bacteria</taxon>
        <taxon>Bacillati</taxon>
        <taxon>Bacillota</taxon>
        <taxon>Clostridia</taxon>
        <taxon>Eubacteriales</taxon>
        <taxon>Syntrophomonadaceae</taxon>
        <taxon>Syntrophomonas</taxon>
    </lineage>
</organism>
<keyword id="KW-0963">Cytoplasm</keyword>
<keyword id="KW-0251">Elongation factor</keyword>
<keyword id="KW-0342">GTP-binding</keyword>
<keyword id="KW-0547">Nucleotide-binding</keyword>
<keyword id="KW-0648">Protein biosynthesis</keyword>
<keyword id="KW-1185">Reference proteome</keyword>
<protein>
    <recommendedName>
        <fullName evidence="1">Elongation factor G 1</fullName>
        <shortName evidence="1">EF-G 1</shortName>
    </recommendedName>
</protein>